<protein>
    <recommendedName>
        <fullName evidence="1">NADH-quinone oxidoreductase subunit N</fullName>
        <ecNumber evidence="1">7.1.1.-</ecNumber>
    </recommendedName>
    <alternativeName>
        <fullName evidence="1">NADH dehydrogenase I subunit N</fullName>
    </alternativeName>
    <alternativeName>
        <fullName evidence="1">NDH-1 subunit N</fullName>
    </alternativeName>
</protein>
<organism>
    <name type="scientific">Salmonella agona (strain SL483)</name>
    <dbReference type="NCBI Taxonomy" id="454166"/>
    <lineage>
        <taxon>Bacteria</taxon>
        <taxon>Pseudomonadati</taxon>
        <taxon>Pseudomonadota</taxon>
        <taxon>Gammaproteobacteria</taxon>
        <taxon>Enterobacterales</taxon>
        <taxon>Enterobacteriaceae</taxon>
        <taxon>Salmonella</taxon>
    </lineage>
</organism>
<comment type="function">
    <text evidence="1">NDH-1 shuttles electrons from NADH, via FMN and iron-sulfur (Fe-S) centers, to quinones in the respiratory chain. The immediate electron acceptor for the enzyme in this species is believed to be ubiquinone. Couples the redox reaction to proton translocation (for every two electrons transferred, four hydrogen ions are translocated across the cytoplasmic membrane), and thus conserves the redox energy in a proton gradient.</text>
</comment>
<comment type="catalytic activity">
    <reaction evidence="1">
        <text>a quinone + NADH + 5 H(+)(in) = a quinol + NAD(+) + 4 H(+)(out)</text>
        <dbReference type="Rhea" id="RHEA:57888"/>
        <dbReference type="ChEBI" id="CHEBI:15378"/>
        <dbReference type="ChEBI" id="CHEBI:24646"/>
        <dbReference type="ChEBI" id="CHEBI:57540"/>
        <dbReference type="ChEBI" id="CHEBI:57945"/>
        <dbReference type="ChEBI" id="CHEBI:132124"/>
    </reaction>
</comment>
<comment type="subunit">
    <text evidence="1">NDH-1 is composed of 13 different subunits. Subunits NuoA, H, J, K, L, M, N constitute the membrane sector of the complex.</text>
</comment>
<comment type="subcellular location">
    <subcellularLocation>
        <location evidence="1">Cell inner membrane</location>
        <topology evidence="1">Multi-pass membrane protein</topology>
    </subcellularLocation>
</comment>
<comment type="similarity">
    <text evidence="1">Belongs to the complex I subunit 2 family.</text>
</comment>
<accession>B5EZJ7</accession>
<reference key="1">
    <citation type="journal article" date="2011" name="J. Bacteriol.">
        <title>Comparative genomics of 28 Salmonella enterica isolates: evidence for CRISPR-mediated adaptive sublineage evolution.</title>
        <authorList>
            <person name="Fricke W.F."/>
            <person name="Mammel M.K."/>
            <person name="McDermott P.F."/>
            <person name="Tartera C."/>
            <person name="White D.G."/>
            <person name="Leclerc J.E."/>
            <person name="Ravel J."/>
            <person name="Cebula T.A."/>
        </authorList>
    </citation>
    <scope>NUCLEOTIDE SEQUENCE [LARGE SCALE GENOMIC DNA]</scope>
    <source>
        <strain>SL483</strain>
    </source>
</reference>
<gene>
    <name evidence="1" type="primary">nuoN</name>
    <name type="ordered locus">SeAg_B2455</name>
</gene>
<feature type="chain" id="PRO_1000145873" description="NADH-quinone oxidoreductase subunit N">
    <location>
        <begin position="1"/>
        <end position="485"/>
    </location>
</feature>
<feature type="transmembrane region" description="Helical" evidence="1">
    <location>
        <begin position="8"/>
        <end position="28"/>
    </location>
</feature>
<feature type="transmembrane region" description="Helical" evidence="1">
    <location>
        <begin position="35"/>
        <end position="55"/>
    </location>
</feature>
<feature type="transmembrane region" description="Helical" evidence="1">
    <location>
        <begin position="71"/>
        <end position="91"/>
    </location>
</feature>
<feature type="transmembrane region" description="Helical" evidence="1">
    <location>
        <begin position="105"/>
        <end position="125"/>
    </location>
</feature>
<feature type="transmembrane region" description="Helical" evidence="1">
    <location>
        <begin position="127"/>
        <end position="147"/>
    </location>
</feature>
<feature type="transmembrane region" description="Helical" evidence="1">
    <location>
        <begin position="159"/>
        <end position="179"/>
    </location>
</feature>
<feature type="transmembrane region" description="Helical" evidence="1">
    <location>
        <begin position="203"/>
        <end position="223"/>
    </location>
</feature>
<feature type="transmembrane region" description="Helical" evidence="1">
    <location>
        <begin position="235"/>
        <end position="255"/>
    </location>
</feature>
<feature type="transmembrane region" description="Helical" evidence="1">
    <location>
        <begin position="271"/>
        <end position="291"/>
    </location>
</feature>
<feature type="transmembrane region" description="Helical" evidence="1">
    <location>
        <begin position="297"/>
        <end position="317"/>
    </location>
</feature>
<feature type="transmembrane region" description="Helical" evidence="1">
    <location>
        <begin position="326"/>
        <end position="346"/>
    </location>
</feature>
<feature type="transmembrane region" description="Helical" evidence="1">
    <location>
        <begin position="373"/>
        <end position="393"/>
    </location>
</feature>
<feature type="transmembrane region" description="Helical" evidence="1">
    <location>
        <begin position="408"/>
        <end position="430"/>
    </location>
</feature>
<feature type="transmembrane region" description="Helical" evidence="1">
    <location>
        <begin position="455"/>
        <end position="475"/>
    </location>
</feature>
<sequence length="485" mass="52013">MTITPQHLIALLPLLIVGLTVVVVMLSIAWRRNHFLNATLSVIGLNAALVSLWFVGQAGAMDVTPLMRVDGFAMLYTGLVLLASLATCTFAYPWLEGYNDNQEEFYLLVLIASLGGILLANANHLAALFLGIELISLPLFGLIGYAFRQKRSLEASIKYTILSAAASSFLLFGMALVYAQSGNLSFEALGKSLGDGMLHEPLLLAGFGLMIVGLGFKLSLVPFHLWTPDVYQGAPAPVSTFLATASKIAIFGVVMRLFLYAPVGDSEAVRVVLGIIAFASIIFGNLMALSQTNIKRLLGYSSISHLGYLLVALIALQSGEMSMEAVGVYLAGYLFSSLGAFGVVSLMSSPFRGPDADSLYSYRGLFWHRPVLAAVMTVMMLSLAGIPMTLGFIGKFYVLAVGVQASLWWLVAAVVVGSAIGLYYYLRVAVSLYLHAPQQPGRDAPTNWQYSAGGIVVLISALLVLVLGVWPQPLISLVQLAMPLM</sequence>
<name>NUON_SALA4</name>
<proteinExistence type="inferred from homology"/>
<keyword id="KW-0997">Cell inner membrane</keyword>
<keyword id="KW-1003">Cell membrane</keyword>
<keyword id="KW-0472">Membrane</keyword>
<keyword id="KW-0520">NAD</keyword>
<keyword id="KW-0874">Quinone</keyword>
<keyword id="KW-1278">Translocase</keyword>
<keyword id="KW-0812">Transmembrane</keyword>
<keyword id="KW-1133">Transmembrane helix</keyword>
<keyword id="KW-0813">Transport</keyword>
<keyword id="KW-0830">Ubiquinone</keyword>
<dbReference type="EC" id="7.1.1.-" evidence="1"/>
<dbReference type="EMBL" id="CP001138">
    <property type="protein sequence ID" value="ACH51358.1"/>
    <property type="molecule type" value="Genomic_DNA"/>
</dbReference>
<dbReference type="RefSeq" id="WP_000156667.1">
    <property type="nucleotide sequence ID" value="NC_011149.1"/>
</dbReference>
<dbReference type="SMR" id="B5EZJ7"/>
<dbReference type="KEGG" id="sea:SeAg_B2455"/>
<dbReference type="HOGENOM" id="CLU_007100_1_5_6"/>
<dbReference type="Proteomes" id="UP000008819">
    <property type="component" value="Chromosome"/>
</dbReference>
<dbReference type="GO" id="GO:0005886">
    <property type="term" value="C:plasma membrane"/>
    <property type="evidence" value="ECO:0007669"/>
    <property type="project" value="UniProtKB-SubCell"/>
</dbReference>
<dbReference type="GO" id="GO:0008137">
    <property type="term" value="F:NADH dehydrogenase (ubiquinone) activity"/>
    <property type="evidence" value="ECO:0007669"/>
    <property type="project" value="InterPro"/>
</dbReference>
<dbReference type="GO" id="GO:0050136">
    <property type="term" value="F:NADH:ubiquinone reductase (non-electrogenic) activity"/>
    <property type="evidence" value="ECO:0007669"/>
    <property type="project" value="UniProtKB-UniRule"/>
</dbReference>
<dbReference type="GO" id="GO:0048038">
    <property type="term" value="F:quinone binding"/>
    <property type="evidence" value="ECO:0007669"/>
    <property type="project" value="UniProtKB-KW"/>
</dbReference>
<dbReference type="GO" id="GO:0042773">
    <property type="term" value="P:ATP synthesis coupled electron transport"/>
    <property type="evidence" value="ECO:0007669"/>
    <property type="project" value="InterPro"/>
</dbReference>
<dbReference type="HAMAP" id="MF_00445">
    <property type="entry name" value="NDH1_NuoN_1"/>
    <property type="match status" value="1"/>
</dbReference>
<dbReference type="InterPro" id="IPR010096">
    <property type="entry name" value="NADH-Q_OxRdtase_suN/2"/>
</dbReference>
<dbReference type="InterPro" id="IPR001750">
    <property type="entry name" value="ND/Mrp_TM"/>
</dbReference>
<dbReference type="NCBIfam" id="TIGR01770">
    <property type="entry name" value="NDH_I_N"/>
    <property type="match status" value="1"/>
</dbReference>
<dbReference type="NCBIfam" id="NF004439">
    <property type="entry name" value="PRK05777.1-1"/>
    <property type="match status" value="1"/>
</dbReference>
<dbReference type="PANTHER" id="PTHR22773">
    <property type="entry name" value="NADH DEHYDROGENASE"/>
    <property type="match status" value="1"/>
</dbReference>
<dbReference type="Pfam" id="PF00361">
    <property type="entry name" value="Proton_antipo_M"/>
    <property type="match status" value="1"/>
</dbReference>
<evidence type="ECO:0000255" key="1">
    <source>
        <dbReference type="HAMAP-Rule" id="MF_00445"/>
    </source>
</evidence>